<protein>
    <recommendedName>
        <fullName>Interleukin-2</fullName>
        <shortName>IL-2</shortName>
    </recommendedName>
    <alternativeName>
        <fullName>T-cell growth factor</fullName>
        <shortName>TCGF</shortName>
    </alternativeName>
</protein>
<name>IL2_BUBBU</name>
<feature type="signal peptide" evidence="1">
    <location>
        <begin position="1"/>
        <end position="20"/>
    </location>
</feature>
<feature type="chain" id="PRO_0000015475" description="Interleukin-2">
    <location>
        <begin position="21"/>
        <end position="155"/>
    </location>
</feature>
<feature type="glycosylation site" description="O-linked (GalNAc...) threonine" evidence="1">
    <location>
        <position position="23"/>
    </location>
</feature>
<feature type="disulfide bond" evidence="1">
    <location>
        <begin position="79"/>
        <end position="127"/>
    </location>
</feature>
<comment type="function">
    <text evidence="2">Cytokine produced by activated CD4-positive helper T-cells and to a lesser extend activated CD8-positive T-cells and natural killer (NK) cells that plays pivotal roles in the immune response and tolerance. Binds to a receptor complex composed of either the high-affinity trimeric IL-2R (IL2RA/CD25, IL2RB/CD122 and IL2RG/CD132) or the low-affinity dimeric IL-2R (IL2RB and IL2RG). Interaction with the receptor leads to oligomerization and conformation changes in the IL-2R subunits resulting in downstream signaling starting with phosphorylation of JAK1 and JAK3. In turn, JAK1 and JAK3 phosphorylate the receptor to form a docking site leading to the phosphorylation of several substrates including STAT5. This process leads to activation of several pathways including STAT, phosphoinositide-3-kinase/PI3K and mitogen-activated protein kinase/MAPK pathways. Functions as a T-cell growth factor and can increase NK-cell cytolytic activity as well. Promotes strong proliferation of activated B-cells and subsequently immunoglobulin production. Plays a pivotal role in regulating the adaptive immune system by controlling the survival and proliferation of regulatory T-cells, which are required for the maintenance of immune tolerance. Moreover, participates in the differentiation and homeostasis of effector T-cell subsets, including Th1, Th2, Th17 as well as memory CD8-positive T-cells.</text>
</comment>
<comment type="subcellular location">
    <subcellularLocation>
        <location evidence="1">Secreted</location>
    </subcellularLocation>
</comment>
<comment type="similarity">
    <text evidence="3">Belongs to the IL-2 family.</text>
</comment>
<sequence length="155" mass="17542">MYKIQLLSCIALTLALVANGAPTSSSTGNTMKEVKSLLLDLQLLLEKVKNPENLKLSRMHTFNFYVPKVNATELKHLKCLLEELKLLEEVLNLAPSKNLNPREIKDSMDNIKRIVLELQGSETGFTCEYDDATVKAVEFLNKWITFCQSIYSTMT</sequence>
<organism>
    <name type="scientific">Bubalus bubalis</name>
    <name type="common">Domestic water buffalo</name>
    <dbReference type="NCBI Taxonomy" id="89462"/>
    <lineage>
        <taxon>Eukaryota</taxon>
        <taxon>Metazoa</taxon>
        <taxon>Chordata</taxon>
        <taxon>Craniata</taxon>
        <taxon>Vertebrata</taxon>
        <taxon>Euteleostomi</taxon>
        <taxon>Mammalia</taxon>
        <taxon>Eutheria</taxon>
        <taxon>Laurasiatheria</taxon>
        <taxon>Artiodactyla</taxon>
        <taxon>Ruminantia</taxon>
        <taxon>Pecora</taxon>
        <taxon>Bovidae</taxon>
        <taxon>Bovinae</taxon>
        <taxon>Bubalus</taxon>
    </lineage>
</organism>
<keyword id="KW-1064">Adaptive immunity</keyword>
<keyword id="KW-0202">Cytokine</keyword>
<keyword id="KW-1015">Disulfide bond</keyword>
<keyword id="KW-0325">Glycoprotein</keyword>
<keyword id="KW-0339">Growth factor</keyword>
<keyword id="KW-0391">Immunity</keyword>
<keyword id="KW-0964">Secreted</keyword>
<keyword id="KW-0732">Signal</keyword>
<dbReference type="EMBL" id="AF363786">
    <property type="protein sequence ID" value="AAK50039.1"/>
    <property type="molecule type" value="mRNA"/>
</dbReference>
<dbReference type="SMR" id="Q95KP3"/>
<dbReference type="GlyCosmos" id="Q95KP3">
    <property type="glycosylation" value="1 site, No reported glycans"/>
</dbReference>
<dbReference type="GO" id="GO:0005615">
    <property type="term" value="C:extracellular space"/>
    <property type="evidence" value="ECO:0007669"/>
    <property type="project" value="UniProtKB-KW"/>
</dbReference>
<dbReference type="GO" id="GO:0005125">
    <property type="term" value="F:cytokine activity"/>
    <property type="evidence" value="ECO:0007669"/>
    <property type="project" value="UniProtKB-KW"/>
</dbReference>
<dbReference type="GO" id="GO:0008083">
    <property type="term" value="F:growth factor activity"/>
    <property type="evidence" value="ECO:0007669"/>
    <property type="project" value="UniProtKB-KW"/>
</dbReference>
<dbReference type="GO" id="GO:0005134">
    <property type="term" value="F:interleukin-2 receptor binding"/>
    <property type="evidence" value="ECO:0007669"/>
    <property type="project" value="InterPro"/>
</dbReference>
<dbReference type="GO" id="GO:0002250">
    <property type="term" value="P:adaptive immune response"/>
    <property type="evidence" value="ECO:0007669"/>
    <property type="project" value="UniProtKB-KW"/>
</dbReference>
<dbReference type="GO" id="GO:0009891">
    <property type="term" value="P:positive regulation of biosynthetic process"/>
    <property type="evidence" value="ECO:0007669"/>
    <property type="project" value="UniProtKB-ARBA"/>
</dbReference>
<dbReference type="Gene3D" id="1.20.1250.10">
    <property type="match status" value="1"/>
</dbReference>
<dbReference type="InterPro" id="IPR009079">
    <property type="entry name" value="4_helix_cytokine-like_core"/>
</dbReference>
<dbReference type="InterPro" id="IPR000779">
    <property type="entry name" value="IL-2"/>
</dbReference>
<dbReference type="InterPro" id="IPR030477">
    <property type="entry name" value="IL-2_CS"/>
</dbReference>
<dbReference type="PANTHER" id="PTHR48487">
    <property type="entry name" value="INTERLEUKIN-2"/>
    <property type="match status" value="1"/>
</dbReference>
<dbReference type="PANTHER" id="PTHR48487:SF1">
    <property type="entry name" value="INTERLEUKIN-2"/>
    <property type="match status" value="1"/>
</dbReference>
<dbReference type="Pfam" id="PF00715">
    <property type="entry name" value="IL2"/>
    <property type="match status" value="1"/>
</dbReference>
<dbReference type="PRINTS" id="PR00265">
    <property type="entry name" value="INTERLEUKIN2"/>
</dbReference>
<dbReference type="SMART" id="SM00189">
    <property type="entry name" value="IL2"/>
    <property type="match status" value="1"/>
</dbReference>
<dbReference type="SUPFAM" id="SSF47266">
    <property type="entry name" value="4-helical cytokines"/>
    <property type="match status" value="1"/>
</dbReference>
<dbReference type="PROSITE" id="PS00424">
    <property type="entry name" value="INTERLEUKIN_2"/>
    <property type="match status" value="1"/>
</dbReference>
<reference key="1">
    <citation type="journal article" date="2002" name="Eur. J. Immunogenet.">
        <title>Buffalo (Bubalus bubalis) interleukin-2: sequence analysis reveals high nucleotide and amino acid identity with interleukin-2 of cattle and other ruminants.</title>
        <authorList>
            <person name="Sreekumar E."/>
            <person name="Premraj A."/>
            <person name="Saravanakumar M."/>
            <person name="Rasool T.J."/>
        </authorList>
    </citation>
    <scope>NUCLEOTIDE SEQUENCE [MRNA]</scope>
</reference>
<proteinExistence type="evidence at transcript level"/>
<accession>Q95KP3</accession>
<gene>
    <name type="primary">IL2</name>
</gene>
<evidence type="ECO:0000250" key="1"/>
<evidence type="ECO:0000250" key="2">
    <source>
        <dbReference type="UniProtKB" id="P60568"/>
    </source>
</evidence>
<evidence type="ECO:0000305" key="3"/>